<feature type="transit peptide" description="Chloroplast" evidence="3">
    <location>
        <begin position="1"/>
        <end position="79"/>
    </location>
</feature>
<feature type="chain" id="PRO_0000249185" description="Small ribosomal subunit protein bS21c">
    <location>
        <begin position="80"/>
        <end position="180"/>
    </location>
</feature>
<feature type="region of interest" description="Disordered" evidence="2">
    <location>
        <begin position="14"/>
        <end position="49"/>
    </location>
</feature>
<feature type="region of interest" description="Disordered" evidence="2">
    <location>
        <begin position="124"/>
        <end position="180"/>
    </location>
</feature>
<feature type="compositionally biased region" description="Low complexity" evidence="2">
    <location>
        <begin position="14"/>
        <end position="45"/>
    </location>
</feature>
<feature type="compositionally biased region" description="Basic residues" evidence="2">
    <location>
        <begin position="130"/>
        <end position="147"/>
    </location>
</feature>
<feature type="compositionally biased region" description="Basic and acidic residues" evidence="2">
    <location>
        <begin position="154"/>
        <end position="166"/>
    </location>
</feature>
<dbReference type="EMBL" id="KQ142159">
    <property type="protein sequence ID" value="KNA18384.1"/>
    <property type="molecule type" value="Genomic_DNA"/>
</dbReference>
<dbReference type="PDB" id="4V61">
    <property type="method" value="EM"/>
    <property type="resolution" value="9.40 A"/>
    <property type="chains" value="U=80-114"/>
</dbReference>
<dbReference type="PDB" id="5MMJ">
    <property type="method" value="EM"/>
    <property type="resolution" value="3.65 A"/>
    <property type="chains" value="u=1-180"/>
</dbReference>
<dbReference type="PDB" id="5MMM">
    <property type="method" value="EM"/>
    <property type="resolution" value="3.40 A"/>
    <property type="chains" value="u=1-180"/>
</dbReference>
<dbReference type="PDB" id="5X8P">
    <property type="method" value="EM"/>
    <property type="resolution" value="3.40 A"/>
    <property type="chains" value="u=44-180"/>
</dbReference>
<dbReference type="PDB" id="5X8R">
    <property type="method" value="EM"/>
    <property type="resolution" value="3.70 A"/>
    <property type="chains" value="u=44-180"/>
</dbReference>
<dbReference type="PDB" id="6ERI">
    <property type="method" value="EM"/>
    <property type="resolution" value="3.00 A"/>
    <property type="chains" value="BU=83-141"/>
</dbReference>
<dbReference type="PDBsum" id="4V61"/>
<dbReference type="PDBsum" id="5MMJ"/>
<dbReference type="PDBsum" id="5MMM"/>
<dbReference type="PDBsum" id="5X8P"/>
<dbReference type="PDBsum" id="5X8R"/>
<dbReference type="PDBsum" id="6ERI"/>
<dbReference type="EMDB" id="EMD-3532"/>
<dbReference type="EMDB" id="EMD-3533"/>
<dbReference type="EMDB" id="EMD-3941"/>
<dbReference type="EMDB" id="EMD-6709"/>
<dbReference type="EMDB" id="EMD-6710"/>
<dbReference type="SMR" id="P82024"/>
<dbReference type="STRING" id="3562.P82024"/>
<dbReference type="OrthoDB" id="785538at2759"/>
<dbReference type="Proteomes" id="UP001155700">
    <property type="component" value="Unplaced"/>
</dbReference>
<dbReference type="GO" id="GO:0009507">
    <property type="term" value="C:chloroplast"/>
    <property type="evidence" value="ECO:0007669"/>
    <property type="project" value="UniProtKB-SubCell"/>
</dbReference>
<dbReference type="GO" id="GO:1990904">
    <property type="term" value="C:ribonucleoprotein complex"/>
    <property type="evidence" value="ECO:0007669"/>
    <property type="project" value="UniProtKB-KW"/>
</dbReference>
<dbReference type="GO" id="GO:0005840">
    <property type="term" value="C:ribosome"/>
    <property type="evidence" value="ECO:0007669"/>
    <property type="project" value="UniProtKB-KW"/>
</dbReference>
<dbReference type="GO" id="GO:0019843">
    <property type="term" value="F:rRNA binding"/>
    <property type="evidence" value="ECO:0007669"/>
    <property type="project" value="UniProtKB-KW"/>
</dbReference>
<dbReference type="GO" id="GO:0003735">
    <property type="term" value="F:structural constituent of ribosome"/>
    <property type="evidence" value="ECO:0007669"/>
    <property type="project" value="InterPro"/>
</dbReference>
<dbReference type="GO" id="GO:0006412">
    <property type="term" value="P:translation"/>
    <property type="evidence" value="ECO:0007669"/>
    <property type="project" value="InterPro"/>
</dbReference>
<dbReference type="Gene3D" id="1.20.5.1150">
    <property type="entry name" value="Ribosomal protein S8"/>
    <property type="match status" value="1"/>
</dbReference>
<dbReference type="HAMAP" id="MF_00358">
    <property type="entry name" value="Ribosomal_bS21"/>
    <property type="match status" value="1"/>
</dbReference>
<dbReference type="InterPro" id="IPR001911">
    <property type="entry name" value="Ribosomal_bS21"/>
</dbReference>
<dbReference type="InterPro" id="IPR038380">
    <property type="entry name" value="Ribosomal_bS21_sf"/>
</dbReference>
<dbReference type="NCBIfam" id="TIGR00030">
    <property type="entry name" value="S21p"/>
    <property type="match status" value="1"/>
</dbReference>
<dbReference type="PANTHER" id="PTHR21109">
    <property type="entry name" value="MITOCHONDRIAL 28S RIBOSOMAL PROTEIN S21"/>
    <property type="match status" value="1"/>
</dbReference>
<dbReference type="PANTHER" id="PTHR21109:SF0">
    <property type="entry name" value="SMALL RIBOSOMAL SUBUNIT PROTEIN BS21M"/>
    <property type="match status" value="1"/>
</dbReference>
<dbReference type="Pfam" id="PF01165">
    <property type="entry name" value="Ribosomal_S21"/>
    <property type="match status" value="1"/>
</dbReference>
<dbReference type="PRINTS" id="PR00976">
    <property type="entry name" value="RIBOSOMALS21"/>
</dbReference>
<proteinExistence type="evidence at protein level"/>
<name>RR21_SPIOL</name>
<reference key="1">
    <citation type="journal article" date="2014" name="Nature">
        <title>The genome of the recently domesticated crop plant sugar beet (Beta vulgaris).</title>
        <authorList>
            <person name="Dohm J.C."/>
            <person name="Minoche A.E."/>
            <person name="Holtgraewe D."/>
            <person name="Capella-Gutierrez S."/>
            <person name="Zakrzewski F."/>
            <person name="Tafer H."/>
            <person name="Rupp O."/>
            <person name="Soerensen T.R."/>
            <person name="Stracke R."/>
            <person name="Reinhardt R."/>
            <person name="Goesmann A."/>
            <person name="Kraft T."/>
            <person name="Schulz B."/>
            <person name="Stadler P.F."/>
            <person name="Schmidt T."/>
            <person name="Gabaldon T."/>
            <person name="Lehrach H."/>
            <person name="Weisshaar B."/>
            <person name="Himmelbauer H."/>
        </authorList>
    </citation>
    <scope>NUCLEOTIDE SEQUENCE [LARGE SCALE GENOMIC DNA]</scope>
    <source>
        <strain>cv. Viroflay</strain>
        <tissue>Leaf</tissue>
    </source>
</reference>
<reference key="2">
    <citation type="journal article" date="2000" name="J. Biol. Chem.">
        <title>The plastid ribosomal proteins. Identification of all the proteins in the 30S subunit of an organelle ribosome (chloroplast).</title>
        <authorList>
            <person name="Yamaguchi K."/>
            <person name="von Knoblauch K."/>
            <person name="Subramanian A.R."/>
        </authorList>
    </citation>
    <scope>PROTEIN SEQUENCE OF 80-114</scope>
    <scope>SUBUNIT</scope>
    <scope>SUBCELLULAR LOCATION</scope>
    <scope>MASS SPECTROMETRY</scope>
    <source>
        <strain>cv. Alwaro</strain>
        <tissue>Leaf</tissue>
    </source>
</reference>
<reference key="3">
    <citation type="journal article" date="2007" name="Proc. Natl. Acad. Sci. U.S.A.">
        <title>Cryo-EM study of the spinach chloroplast ribosome reveals the structural and functional roles of plastid-specific ribosomal proteins.</title>
        <authorList>
            <person name="Sharma M.R."/>
            <person name="Wilson D.N."/>
            <person name="Datta P.P."/>
            <person name="Barat C."/>
            <person name="Schluenzen F."/>
            <person name="Fucini P."/>
            <person name="Agrawal R.K."/>
        </authorList>
    </citation>
    <scope>STRUCTURE BY ELECTRON MICROSCOPY (9.4 ANGSTROMS)</scope>
</reference>
<reference key="4">
    <citation type="journal article" date="2017" name="EMBO J.">
        <title>The complete structure of the chloroplast 70S ribosome in complex with translation factor pY.</title>
        <authorList>
            <person name="Bieri P."/>
            <person name="Leibundgut M."/>
            <person name="Saurer M."/>
            <person name="Boehringer D."/>
            <person name="Ban N."/>
        </authorList>
    </citation>
    <scope>STRUCTURE BY ELECTRON MICROSCOPY (3.40 ANGSTROMS)</scope>
    <scope>SUBUNIT</scope>
    <scope>SUBCELLULAR LOCATION</scope>
</reference>
<keyword id="KW-0002">3D-structure</keyword>
<keyword id="KW-0150">Chloroplast</keyword>
<keyword id="KW-0903">Direct protein sequencing</keyword>
<keyword id="KW-0934">Plastid</keyword>
<keyword id="KW-1185">Reference proteome</keyword>
<keyword id="KW-0687">Ribonucleoprotein</keyword>
<keyword id="KW-0689">Ribosomal protein</keyword>
<keyword id="KW-0694">RNA-binding</keyword>
<keyword id="KW-0699">rRNA-binding</keyword>
<keyword id="KW-0809">Transit peptide</keyword>
<organism>
    <name type="scientific">Spinacia oleracea</name>
    <name type="common">Spinach</name>
    <dbReference type="NCBI Taxonomy" id="3562"/>
    <lineage>
        <taxon>Eukaryota</taxon>
        <taxon>Viridiplantae</taxon>
        <taxon>Streptophyta</taxon>
        <taxon>Embryophyta</taxon>
        <taxon>Tracheophyta</taxon>
        <taxon>Spermatophyta</taxon>
        <taxon>Magnoliopsida</taxon>
        <taxon>eudicotyledons</taxon>
        <taxon>Gunneridae</taxon>
        <taxon>Pentapetalae</taxon>
        <taxon>Caryophyllales</taxon>
        <taxon>Chenopodiaceae</taxon>
        <taxon>Chenopodioideae</taxon>
        <taxon>Anserineae</taxon>
        <taxon>Spinacia</taxon>
    </lineage>
</organism>
<comment type="function">
    <text evidence="7 8">Component of the chloroplast ribosome (chloro-ribosome), a dedicated translation machinery responsible for the synthesis of chloroplast genome-encoded proteins, including proteins of the transcription and translation machinery and components of the photosynthetic apparatus.</text>
</comment>
<comment type="subunit">
    <text evidence="3 4">Component of the chloroplast small ribosomal subunit (SSU). Mature 70S chloroplast ribosomes of higher plants consist of a small (30S) and a large (50S) subunit. The 30S small subunit contains 1 molecule of ribosomal RNA (16S rRNA) and 24 different proteins. The 50S large subunit contains 3 rRNA molecules (23S, 5S and 4.5S rRNA) and 33 different proteins (PubMed:10874039, PubMed:28007896). bS21c binds directly to 16S ribosomal RNA (PubMed:10874039).</text>
</comment>
<comment type="subcellular location">
    <subcellularLocation>
        <location evidence="3">Plastid</location>
        <location evidence="3">Chloroplast</location>
    </subcellularLocation>
</comment>
<comment type="mass spectrometry"/>
<comment type="mass spectrometry"/>
<comment type="similarity">
    <text evidence="1">Belongs to the bacterial ribosomal protein bS21 family.</text>
</comment>
<evidence type="ECO:0000255" key="1"/>
<evidence type="ECO:0000256" key="2">
    <source>
        <dbReference type="SAM" id="MobiDB-lite"/>
    </source>
</evidence>
<evidence type="ECO:0000269" key="3">
    <source>
    </source>
</evidence>
<evidence type="ECO:0000269" key="4">
    <source>
    </source>
</evidence>
<evidence type="ECO:0000303" key="5">
    <source>
    </source>
</evidence>
<evidence type="ECO:0000303" key="6">
    <source>
    </source>
</evidence>
<evidence type="ECO:0000305" key="7">
    <source>
    </source>
</evidence>
<evidence type="ECO:0000305" key="8">
    <source>
    </source>
</evidence>
<gene>
    <name type="primary">rps21</name>
    <name type="ORF">SOVF_070750</name>
</gene>
<protein>
    <recommendedName>
        <fullName evidence="6">Small ribosomal subunit protein bS21c</fullName>
    </recommendedName>
    <alternativeName>
        <fullName evidence="5">30S ribosomal protein S21, chloroplastic</fullName>
    </alternativeName>
</protein>
<accession>P82024</accession>
<accession>A0A0K9RHF9</accession>
<sequence>MASTSSLLNFLSPLFPSNTSLPPSSNPKFPNPNSLSSQQNSISISSKKHENAAIAKKEEYPGDLMAVVCPSLAFSNTLYFRSAYNVQVLVDDNENEERLLNRFRREVMRAGVIQECKRRRYFENKQEEKKRKHREAAKRNSRRRRGPFRGPFPGKEEATKVDKKEDDGDNWDMPEGGAPF</sequence>